<keyword id="KW-0997">Cell inner membrane</keyword>
<keyword id="KW-1003">Cell membrane</keyword>
<keyword id="KW-0472">Membrane</keyword>
<keyword id="KW-0479">Metal-binding</keyword>
<keyword id="KW-1185">Reference proteome</keyword>
<keyword id="KW-0813">Transport</keyword>
<keyword id="KW-0862">Zinc</keyword>
<proteinExistence type="inferred from homology"/>
<accession>Q5ZYZ0</accession>
<feature type="chain" id="PRO_0000387272" description="Probable inorganic carbon transporter subunit DabA">
    <location>
        <begin position="1"/>
        <end position="762"/>
    </location>
</feature>
<feature type="binding site" evidence="1">
    <location>
        <position position="279"/>
    </location>
    <ligand>
        <name>Zn(2+)</name>
        <dbReference type="ChEBI" id="CHEBI:29105"/>
    </ligand>
</feature>
<feature type="binding site" evidence="1">
    <location>
        <position position="281"/>
    </location>
    <ligand>
        <name>Zn(2+)</name>
        <dbReference type="ChEBI" id="CHEBI:29105"/>
    </ligand>
</feature>
<feature type="binding site" evidence="1">
    <location>
        <position position="461"/>
    </location>
    <ligand>
        <name>Zn(2+)</name>
        <dbReference type="ChEBI" id="CHEBI:29105"/>
    </ligand>
</feature>
<feature type="binding site" evidence="1">
    <location>
        <position position="476"/>
    </location>
    <ligand>
        <name>Zn(2+)</name>
        <dbReference type="ChEBI" id="CHEBI:29105"/>
    </ligand>
</feature>
<evidence type="ECO:0000255" key="1">
    <source>
        <dbReference type="HAMAP-Rule" id="MF_01871"/>
    </source>
</evidence>
<comment type="function">
    <text evidence="1">Part of an energy-coupled inorganic carbon pump.</text>
</comment>
<comment type="cofactor">
    <cofactor evidence="1">
        <name>Zn(2+)</name>
        <dbReference type="ChEBI" id="CHEBI:29105"/>
    </cofactor>
</comment>
<comment type="subunit">
    <text evidence="1">Forms a complex with DabB.</text>
</comment>
<comment type="subcellular location">
    <subcellularLocation>
        <location evidence="1">Cell inner membrane</location>
        <topology evidence="1">Peripheral membrane protein</topology>
    </subcellularLocation>
</comment>
<comment type="similarity">
    <text evidence="1">Belongs to the inorganic carbon transporter (TC 9.A.2) DabA family.</text>
</comment>
<name>DABA_LEGPH</name>
<protein>
    <recommendedName>
        <fullName evidence="1">Probable inorganic carbon transporter subunit DabA</fullName>
    </recommendedName>
</protein>
<gene>
    <name evidence="1" type="primary">dabA</name>
    <name type="ordered locus">lpg0221</name>
</gene>
<sequence>MSSHITLIKTNTSNENQMTQCNYPVDNDVMIIQAMVNNVTKQITPVWPLEKFIACNSLHGFESMSFEEAVIQNQTAKKGTPFNEKLERVNWHMIKWCGSFLDIGQGTIEMPHRDKGLYFGFLKLAPFDSTLHQNNKSTKNWLSNLPEMPEQAIRLCLDKLGVLNQRQEEFLQSTLSHLPGWAGYIKWISEWKNRNGKEENPVSLVDFLAVRLIITCILWPEANLEEKKKEKDSADTKQLIQNIKHKEDDYRQLLLKKLLPELNKVQIKGNRAKAQMVFCIDVRSEPFRRCIEKLGHYETLGFAGFFGLPVSIKDYDGETIKDSCPVLLKPRFNIHEKAIAANEHCLEHHEKGKEFKKILNRVYQQLKYNFSTPFALVESLGIWCGITMFLKSCSPIFARRLTQDLNEMICPSIQTQPVFELDLLEKEVGISLQEQIAYAEMALRLMGLTDNFAKLVIFCGHGSSTQNNPYASALDCGACGGNQGGKNAQLLASILNKITVRRALAENGINIPQDTVFCGAQHDTTTDEVEIYHSNVSQFIDQDILDQLRADLNMAKHNNNLERINYLNSIDCAEKDIVRRSADWSETRPEWGLARNAAFIVAPRQLTKNIDLEGRCFLHSYDWSKDEDGTLLETILTAPMVVAQWINTQYLFSTIDNVAYGSGSKITHNVAGKIGVMQGNASDLMHGLPLQSVMSHDEKSFHEPQRLLTVVYAPREIISELVEKHDVLKTLFFNEWVHLVAIDPRSHLFYKLEKTNTWSVIK</sequence>
<reference key="1">
    <citation type="journal article" date="2004" name="Science">
        <title>The genomic sequence of the accidental pathogen Legionella pneumophila.</title>
        <authorList>
            <person name="Chien M."/>
            <person name="Morozova I."/>
            <person name="Shi S."/>
            <person name="Sheng H."/>
            <person name="Chen J."/>
            <person name="Gomez S.M."/>
            <person name="Asamani G."/>
            <person name="Hill K."/>
            <person name="Nuara J."/>
            <person name="Feder M."/>
            <person name="Rineer J."/>
            <person name="Greenberg J.J."/>
            <person name="Steshenko V."/>
            <person name="Park S.H."/>
            <person name="Zhao B."/>
            <person name="Teplitskaya E."/>
            <person name="Edwards J.R."/>
            <person name="Pampou S."/>
            <person name="Georghiou A."/>
            <person name="Chou I.-C."/>
            <person name="Iannuccilli W."/>
            <person name="Ulz M.E."/>
            <person name="Kim D.H."/>
            <person name="Geringer-Sameth A."/>
            <person name="Goldsberry C."/>
            <person name="Morozov P."/>
            <person name="Fischer S.G."/>
            <person name="Segal G."/>
            <person name="Qu X."/>
            <person name="Rzhetsky A."/>
            <person name="Zhang P."/>
            <person name="Cayanis E."/>
            <person name="De Jong P.J."/>
            <person name="Ju J."/>
            <person name="Kalachikov S."/>
            <person name="Shuman H.A."/>
            <person name="Russo J.J."/>
        </authorList>
    </citation>
    <scope>NUCLEOTIDE SEQUENCE [LARGE SCALE GENOMIC DNA]</scope>
    <source>
        <strain>Philadelphia 1 / ATCC 33152 / DSM 7513</strain>
    </source>
</reference>
<organism>
    <name type="scientific">Legionella pneumophila subsp. pneumophila (strain Philadelphia 1 / ATCC 33152 / DSM 7513)</name>
    <dbReference type="NCBI Taxonomy" id="272624"/>
    <lineage>
        <taxon>Bacteria</taxon>
        <taxon>Pseudomonadati</taxon>
        <taxon>Pseudomonadota</taxon>
        <taxon>Gammaproteobacteria</taxon>
        <taxon>Legionellales</taxon>
        <taxon>Legionellaceae</taxon>
        <taxon>Legionella</taxon>
    </lineage>
</organism>
<dbReference type="EMBL" id="AE017354">
    <property type="protein sequence ID" value="AAU26328.1"/>
    <property type="molecule type" value="Genomic_DNA"/>
</dbReference>
<dbReference type="RefSeq" id="WP_010945982.1">
    <property type="nucleotide sequence ID" value="NC_002942.5"/>
</dbReference>
<dbReference type="RefSeq" id="YP_094275.1">
    <property type="nucleotide sequence ID" value="NC_002942.5"/>
</dbReference>
<dbReference type="STRING" id="272624.lpg0221"/>
<dbReference type="PaxDb" id="272624-lpg0221"/>
<dbReference type="KEGG" id="lpn:lpg0221"/>
<dbReference type="PATRIC" id="fig|272624.6.peg.234"/>
<dbReference type="eggNOG" id="COG3002">
    <property type="taxonomic scope" value="Bacteria"/>
</dbReference>
<dbReference type="HOGENOM" id="CLU_009885_0_0_6"/>
<dbReference type="OrthoDB" id="9805101at2"/>
<dbReference type="Proteomes" id="UP000000609">
    <property type="component" value="Chromosome"/>
</dbReference>
<dbReference type="GO" id="GO:0005886">
    <property type="term" value="C:plasma membrane"/>
    <property type="evidence" value="ECO:0007669"/>
    <property type="project" value="UniProtKB-SubCell"/>
</dbReference>
<dbReference type="GO" id="GO:0008270">
    <property type="term" value="F:zinc ion binding"/>
    <property type="evidence" value="ECO:0007669"/>
    <property type="project" value="UniProtKB-UniRule"/>
</dbReference>
<dbReference type="HAMAP" id="MF_01871">
    <property type="entry name" value="DabA"/>
    <property type="match status" value="1"/>
</dbReference>
<dbReference type="InterPro" id="IPR018752">
    <property type="entry name" value="DabA"/>
</dbReference>
<dbReference type="PANTHER" id="PTHR38344:SF1">
    <property type="entry name" value="INORGANIC CARBON TRANSPORTER SUBUNIT DABA-RELATED"/>
    <property type="match status" value="1"/>
</dbReference>
<dbReference type="PANTHER" id="PTHR38344">
    <property type="entry name" value="UPF0753 PROTEIN AQ_863"/>
    <property type="match status" value="1"/>
</dbReference>
<dbReference type="Pfam" id="PF10070">
    <property type="entry name" value="DabA"/>
    <property type="match status" value="2"/>
</dbReference>